<comment type="function">
    <text evidence="1">Part of the ABC transporter complex RbsABC involved in ribose import. Responsible for energy coupling to the transport system.</text>
</comment>
<comment type="catalytic activity">
    <reaction evidence="1">
        <text>D-ribose(out) + ATP + H2O = D-ribose(in) + ADP + phosphate + H(+)</text>
        <dbReference type="Rhea" id="RHEA:29903"/>
        <dbReference type="ChEBI" id="CHEBI:15377"/>
        <dbReference type="ChEBI" id="CHEBI:15378"/>
        <dbReference type="ChEBI" id="CHEBI:30616"/>
        <dbReference type="ChEBI" id="CHEBI:43474"/>
        <dbReference type="ChEBI" id="CHEBI:47013"/>
        <dbReference type="ChEBI" id="CHEBI:456216"/>
        <dbReference type="EC" id="7.5.2.7"/>
    </reaction>
</comment>
<comment type="subunit">
    <text evidence="1">The complex is composed of an ATP-binding protein (RbsA), two transmembrane proteins (RbsC) and a solute-binding protein (RbsB).</text>
</comment>
<comment type="subcellular location">
    <subcellularLocation>
        <location evidence="1">Cell membrane</location>
        <topology evidence="1">Peripheral membrane protein</topology>
    </subcellularLocation>
</comment>
<comment type="similarity">
    <text evidence="1">Belongs to the ABC transporter superfamily. Ribose importer (TC 3.A.1.2.1) family.</text>
</comment>
<feature type="chain" id="PRO_0000261109" description="Ribose import ATP-binding protein RbsA 2">
    <location>
        <begin position="1"/>
        <end position="505"/>
    </location>
</feature>
<feature type="domain" description="ABC transporter 1" evidence="1">
    <location>
        <begin position="13"/>
        <end position="249"/>
    </location>
</feature>
<feature type="domain" description="ABC transporter 2" evidence="1">
    <location>
        <begin position="259"/>
        <end position="503"/>
    </location>
</feature>
<feature type="binding site" evidence="1">
    <location>
        <begin position="45"/>
        <end position="52"/>
    </location>
    <ligand>
        <name>ATP</name>
        <dbReference type="ChEBI" id="CHEBI:30616"/>
    </ligand>
</feature>
<accession>Q825P1</accession>
<dbReference type="EC" id="7.5.2.7" evidence="1"/>
<dbReference type="EMBL" id="BA000030">
    <property type="protein sequence ID" value="BAC75127.1"/>
    <property type="molecule type" value="Genomic_DNA"/>
</dbReference>
<dbReference type="RefSeq" id="WP_010988811.1">
    <property type="nucleotide sequence ID" value="NZ_JZJK01000065.1"/>
</dbReference>
<dbReference type="SMR" id="Q825P1"/>
<dbReference type="GeneID" id="41544484"/>
<dbReference type="KEGG" id="sma:SAVERM_7416"/>
<dbReference type="eggNOG" id="COG1129">
    <property type="taxonomic scope" value="Bacteria"/>
</dbReference>
<dbReference type="HOGENOM" id="CLU_000604_92_0_11"/>
<dbReference type="OrthoDB" id="8416490at2"/>
<dbReference type="Proteomes" id="UP000000428">
    <property type="component" value="Chromosome"/>
</dbReference>
<dbReference type="GO" id="GO:0005886">
    <property type="term" value="C:plasma membrane"/>
    <property type="evidence" value="ECO:0007669"/>
    <property type="project" value="UniProtKB-SubCell"/>
</dbReference>
<dbReference type="GO" id="GO:0015611">
    <property type="term" value="F:ABC-type D-ribose transporter activity"/>
    <property type="evidence" value="ECO:0007669"/>
    <property type="project" value="UniProtKB-EC"/>
</dbReference>
<dbReference type="GO" id="GO:0005524">
    <property type="term" value="F:ATP binding"/>
    <property type="evidence" value="ECO:0007669"/>
    <property type="project" value="UniProtKB-KW"/>
</dbReference>
<dbReference type="GO" id="GO:0016887">
    <property type="term" value="F:ATP hydrolysis activity"/>
    <property type="evidence" value="ECO:0007669"/>
    <property type="project" value="InterPro"/>
</dbReference>
<dbReference type="CDD" id="cd03216">
    <property type="entry name" value="ABC_Carb_Monos_I"/>
    <property type="match status" value="1"/>
</dbReference>
<dbReference type="CDD" id="cd03215">
    <property type="entry name" value="ABC_Carb_Monos_II"/>
    <property type="match status" value="1"/>
</dbReference>
<dbReference type="FunFam" id="3.40.50.300:FF:000127">
    <property type="entry name" value="Ribose import ATP-binding protein RbsA"/>
    <property type="match status" value="1"/>
</dbReference>
<dbReference type="Gene3D" id="3.40.50.300">
    <property type="entry name" value="P-loop containing nucleotide triphosphate hydrolases"/>
    <property type="match status" value="2"/>
</dbReference>
<dbReference type="InterPro" id="IPR003593">
    <property type="entry name" value="AAA+_ATPase"/>
</dbReference>
<dbReference type="InterPro" id="IPR050107">
    <property type="entry name" value="ABC_carbohydrate_import_ATPase"/>
</dbReference>
<dbReference type="InterPro" id="IPR003439">
    <property type="entry name" value="ABC_transporter-like_ATP-bd"/>
</dbReference>
<dbReference type="InterPro" id="IPR017871">
    <property type="entry name" value="ABC_transporter-like_CS"/>
</dbReference>
<dbReference type="InterPro" id="IPR027417">
    <property type="entry name" value="P-loop_NTPase"/>
</dbReference>
<dbReference type="PANTHER" id="PTHR43790">
    <property type="entry name" value="CARBOHYDRATE TRANSPORT ATP-BINDING PROTEIN MG119-RELATED"/>
    <property type="match status" value="1"/>
</dbReference>
<dbReference type="PANTHER" id="PTHR43790:SF3">
    <property type="entry name" value="D-ALLOSE IMPORT ATP-BINDING PROTEIN ALSA-RELATED"/>
    <property type="match status" value="1"/>
</dbReference>
<dbReference type="Pfam" id="PF00005">
    <property type="entry name" value="ABC_tran"/>
    <property type="match status" value="2"/>
</dbReference>
<dbReference type="SMART" id="SM00382">
    <property type="entry name" value="AAA"/>
    <property type="match status" value="2"/>
</dbReference>
<dbReference type="SUPFAM" id="SSF52540">
    <property type="entry name" value="P-loop containing nucleoside triphosphate hydrolases"/>
    <property type="match status" value="2"/>
</dbReference>
<dbReference type="PROSITE" id="PS00211">
    <property type="entry name" value="ABC_TRANSPORTER_1"/>
    <property type="match status" value="1"/>
</dbReference>
<dbReference type="PROSITE" id="PS50893">
    <property type="entry name" value="ABC_TRANSPORTER_2"/>
    <property type="match status" value="2"/>
</dbReference>
<dbReference type="PROSITE" id="PS51254">
    <property type="entry name" value="RBSA"/>
    <property type="match status" value="1"/>
</dbReference>
<keyword id="KW-0067">ATP-binding</keyword>
<keyword id="KW-1003">Cell membrane</keyword>
<keyword id="KW-0472">Membrane</keyword>
<keyword id="KW-0547">Nucleotide-binding</keyword>
<keyword id="KW-1185">Reference proteome</keyword>
<keyword id="KW-0677">Repeat</keyword>
<keyword id="KW-0762">Sugar transport</keyword>
<keyword id="KW-1278">Translocase</keyword>
<keyword id="KW-0813">Transport</keyword>
<name>RBSA2_STRAW</name>
<reference key="1">
    <citation type="journal article" date="2001" name="Proc. Natl. Acad. Sci. U.S.A.">
        <title>Genome sequence of an industrial microorganism Streptomyces avermitilis: deducing the ability of producing secondary metabolites.</title>
        <authorList>
            <person name="Omura S."/>
            <person name="Ikeda H."/>
            <person name="Ishikawa J."/>
            <person name="Hanamoto A."/>
            <person name="Takahashi C."/>
            <person name="Shinose M."/>
            <person name="Takahashi Y."/>
            <person name="Horikawa H."/>
            <person name="Nakazawa H."/>
            <person name="Osonoe T."/>
            <person name="Kikuchi H."/>
            <person name="Shiba T."/>
            <person name="Sakaki Y."/>
            <person name="Hattori M."/>
        </authorList>
    </citation>
    <scope>NUCLEOTIDE SEQUENCE [LARGE SCALE GENOMIC DNA]</scope>
    <source>
        <strain>ATCC 31267 / DSM 46492 / JCM 5070 / NBRC 14893 / NCIMB 12804 / NRRL 8165 / MA-4680</strain>
    </source>
</reference>
<reference key="2">
    <citation type="journal article" date="2003" name="Nat. Biotechnol.">
        <title>Complete genome sequence and comparative analysis of the industrial microorganism Streptomyces avermitilis.</title>
        <authorList>
            <person name="Ikeda H."/>
            <person name="Ishikawa J."/>
            <person name="Hanamoto A."/>
            <person name="Shinose M."/>
            <person name="Kikuchi H."/>
            <person name="Shiba T."/>
            <person name="Sakaki Y."/>
            <person name="Hattori M."/>
            <person name="Omura S."/>
        </authorList>
    </citation>
    <scope>NUCLEOTIDE SEQUENCE [LARGE SCALE GENOMIC DNA]</scope>
    <source>
        <strain>ATCC 31267 / DSM 46492 / JCM 5070 / NBRC 14893 / NCIMB 12804 / NRRL 8165 / MA-4680</strain>
    </source>
</reference>
<evidence type="ECO:0000255" key="1">
    <source>
        <dbReference type="HAMAP-Rule" id="MF_01716"/>
    </source>
</evidence>
<protein>
    <recommendedName>
        <fullName evidence="1">Ribose import ATP-binding protein RbsA 2</fullName>
        <ecNumber evidence="1">7.5.2.7</ecNumber>
    </recommendedName>
</protein>
<sequence>MTHPSDTGPAPVLALEDISKSFGAVRALRDVSLELFPGEVHALAGENGAGKSTLIKTLAGVHRPDAGQVLLDGRPTVFHGPADARDAGIAVIYQEPTLFPDLSIAENIYMGRRPRRSFGRIDHKATRAATAALMRRLGVELDPERPARGLSIADQQIVEIAKALSFDARVLIMDEPTAALTGSEVARLFGVVRTLREQGAAVLFISHRLEEIFQICQRVTTLRDGALISSEPLDGMTEDDLVRRMVGRDLDELYPKQEVRAGEVAMSVRRLTREGVFTDVSFDVRRGEIVGLAGLVGAGRTEVARAVFGIDRWDAGEVEVEGRRLTNGAPSTAMAAGLALVPEDRRAQGLVMNMSIERNIGLTGLRTTVRAGLVDRGAERSRSLDWAAKLQVKYARIADAVSTLSGGNQQKVVLAKWLATGPRVLIVDEPTRGIDVGTKAEVHRLLSALAADGVAVLMISSDLPEILGMADRVLVMHEGRVTAEIPRSEATEESVMAAATGRAAA</sequence>
<proteinExistence type="inferred from homology"/>
<gene>
    <name evidence="1" type="primary">rbsA2</name>
    <name type="ordered locus">SAV_7416</name>
</gene>
<organism>
    <name type="scientific">Streptomyces avermitilis (strain ATCC 31267 / DSM 46492 / JCM 5070 / NBRC 14893 / NCIMB 12804 / NRRL 8165 / MA-4680)</name>
    <dbReference type="NCBI Taxonomy" id="227882"/>
    <lineage>
        <taxon>Bacteria</taxon>
        <taxon>Bacillati</taxon>
        <taxon>Actinomycetota</taxon>
        <taxon>Actinomycetes</taxon>
        <taxon>Kitasatosporales</taxon>
        <taxon>Streptomycetaceae</taxon>
        <taxon>Streptomyces</taxon>
    </lineage>
</organism>